<feature type="chain" id="PRO_0000353097" description="Zinc finger protein 76">
    <location>
        <begin position="1"/>
        <end position="568"/>
    </location>
</feature>
<feature type="repeat" description="1">
    <location>
        <begin position="34"/>
        <end position="45"/>
    </location>
</feature>
<feature type="repeat" description="2">
    <location>
        <begin position="62"/>
        <end position="73"/>
    </location>
</feature>
<feature type="repeat" description="3">
    <location>
        <begin position="88"/>
        <end position="99"/>
    </location>
</feature>
<feature type="zinc finger region" description="C2H2-type 1" evidence="2">
    <location>
        <begin position="165"/>
        <end position="189"/>
    </location>
</feature>
<feature type="zinc finger region" description="C2H2-type 2" evidence="2">
    <location>
        <begin position="195"/>
        <end position="219"/>
    </location>
</feature>
<feature type="zinc finger region" description="C2H2-type 3" evidence="2">
    <location>
        <begin position="225"/>
        <end position="249"/>
    </location>
</feature>
<feature type="zinc finger region" description="C2H2-type 4" evidence="2">
    <location>
        <begin position="255"/>
        <end position="279"/>
    </location>
</feature>
<feature type="zinc finger region" description="C2H2-type 5" evidence="2">
    <location>
        <begin position="285"/>
        <end position="309"/>
    </location>
</feature>
<feature type="zinc finger region" description="C2H2-type 6" evidence="2">
    <location>
        <begin position="315"/>
        <end position="339"/>
    </location>
</feature>
<feature type="zinc finger region" description="C2H2-type 7" evidence="2">
    <location>
        <begin position="345"/>
        <end position="368"/>
    </location>
</feature>
<feature type="region of interest" description="3 X 12 AA approximate repeats">
    <location>
        <begin position="34"/>
        <end position="99"/>
    </location>
</feature>
<feature type="region of interest" description="Disordered" evidence="3">
    <location>
        <begin position="365"/>
        <end position="401"/>
    </location>
</feature>
<feature type="compositionally biased region" description="Low complexity" evidence="3">
    <location>
        <begin position="379"/>
        <end position="396"/>
    </location>
</feature>
<feature type="cross-link" description="Glycyl lysine isopeptide (Lys-Gly) (interchain with G-Cter in SUMO2)" evidence="1">
    <location>
        <position position="24"/>
    </location>
</feature>
<dbReference type="EMBL" id="BC168249">
    <property type="protein sequence ID" value="AAI68249.1"/>
    <property type="molecule type" value="mRNA"/>
</dbReference>
<dbReference type="RefSeq" id="NP_001128227.1">
    <property type="nucleotide sequence ID" value="NM_001134755.1"/>
</dbReference>
<dbReference type="SMR" id="B4F7E9"/>
<dbReference type="FunCoup" id="B4F7E9">
    <property type="interactions" value="787"/>
</dbReference>
<dbReference type="STRING" id="10116.ENSRNOP00000074943"/>
<dbReference type="PhosphoSitePlus" id="B4F7E9"/>
<dbReference type="PaxDb" id="10116-ENSRNOP00000000595"/>
<dbReference type="PeptideAtlas" id="B4F7E9"/>
<dbReference type="GeneID" id="361809"/>
<dbReference type="KEGG" id="rno:361809"/>
<dbReference type="UCSC" id="RGD:1306239">
    <property type="organism name" value="rat"/>
</dbReference>
<dbReference type="AGR" id="RGD:1306239"/>
<dbReference type="CTD" id="224656"/>
<dbReference type="RGD" id="1306239">
    <property type="gene designation" value="Zfp523"/>
</dbReference>
<dbReference type="eggNOG" id="KOG1721">
    <property type="taxonomic scope" value="Eukaryota"/>
</dbReference>
<dbReference type="InParanoid" id="B4F7E9"/>
<dbReference type="OrthoDB" id="6077919at2759"/>
<dbReference type="PhylomeDB" id="B4F7E9"/>
<dbReference type="PRO" id="PR:B4F7E9"/>
<dbReference type="Proteomes" id="UP000002494">
    <property type="component" value="Unplaced"/>
</dbReference>
<dbReference type="GO" id="GO:0005634">
    <property type="term" value="C:nucleus"/>
    <property type="evidence" value="ECO:0000318"/>
    <property type="project" value="GO_Central"/>
</dbReference>
<dbReference type="GO" id="GO:0001228">
    <property type="term" value="F:DNA-binding transcription activator activity, RNA polymerase II-specific"/>
    <property type="evidence" value="ECO:0000266"/>
    <property type="project" value="RGD"/>
</dbReference>
<dbReference type="GO" id="GO:0000981">
    <property type="term" value="F:DNA-binding transcription factor activity, RNA polymerase II-specific"/>
    <property type="evidence" value="ECO:0000318"/>
    <property type="project" value="GO_Central"/>
</dbReference>
<dbReference type="GO" id="GO:0000978">
    <property type="term" value="F:RNA polymerase II cis-regulatory region sequence-specific DNA binding"/>
    <property type="evidence" value="ECO:0000318"/>
    <property type="project" value="GO_Central"/>
</dbReference>
<dbReference type="GO" id="GO:0043565">
    <property type="term" value="F:sequence-specific DNA binding"/>
    <property type="evidence" value="ECO:0000266"/>
    <property type="project" value="RGD"/>
</dbReference>
<dbReference type="GO" id="GO:1990837">
    <property type="term" value="F:sequence-specific double-stranded DNA binding"/>
    <property type="evidence" value="ECO:0000266"/>
    <property type="project" value="RGD"/>
</dbReference>
<dbReference type="GO" id="GO:0008270">
    <property type="term" value="F:zinc ion binding"/>
    <property type="evidence" value="ECO:0007669"/>
    <property type="project" value="UniProtKB-KW"/>
</dbReference>
<dbReference type="GO" id="GO:0045944">
    <property type="term" value="P:positive regulation of transcription by RNA polymerase II"/>
    <property type="evidence" value="ECO:0000266"/>
    <property type="project" value="RGD"/>
</dbReference>
<dbReference type="GO" id="GO:0006357">
    <property type="term" value="P:regulation of transcription by RNA polymerase II"/>
    <property type="evidence" value="ECO:0000318"/>
    <property type="project" value="GO_Central"/>
</dbReference>
<dbReference type="FunFam" id="3.30.160.60:FF:004334">
    <property type="match status" value="1"/>
</dbReference>
<dbReference type="FunFam" id="3.30.160.60:FF:000071">
    <property type="entry name" value="Putative zinc finger protein 143"/>
    <property type="match status" value="1"/>
</dbReference>
<dbReference type="FunFam" id="3.30.160.60:FF:000125">
    <property type="entry name" value="Putative zinc finger protein 143"/>
    <property type="match status" value="1"/>
</dbReference>
<dbReference type="FunFam" id="3.30.160.60:FF:000137">
    <property type="entry name" value="Putative zinc finger protein 143"/>
    <property type="match status" value="1"/>
</dbReference>
<dbReference type="FunFam" id="3.30.160.60:FF:000142">
    <property type="entry name" value="Putative zinc finger protein 143"/>
    <property type="match status" value="1"/>
</dbReference>
<dbReference type="FunFam" id="3.30.160.60:FF:000072">
    <property type="entry name" value="zinc finger protein 143 isoform X1"/>
    <property type="match status" value="1"/>
</dbReference>
<dbReference type="FunFam" id="3.30.160.60:FF:000236">
    <property type="entry name" value="zinc finger protein 143 isoform X1"/>
    <property type="match status" value="1"/>
</dbReference>
<dbReference type="Gene3D" id="3.30.160.60">
    <property type="entry name" value="Classic Zinc Finger"/>
    <property type="match status" value="7"/>
</dbReference>
<dbReference type="InterPro" id="IPR036236">
    <property type="entry name" value="Znf_C2H2_sf"/>
</dbReference>
<dbReference type="InterPro" id="IPR013087">
    <property type="entry name" value="Znf_C2H2_type"/>
</dbReference>
<dbReference type="PANTHER" id="PTHR23235">
    <property type="entry name" value="KRUEPPEL-LIKE TRANSCRIPTION FACTOR"/>
    <property type="match status" value="1"/>
</dbReference>
<dbReference type="Pfam" id="PF00096">
    <property type="entry name" value="zf-C2H2"/>
    <property type="match status" value="5"/>
</dbReference>
<dbReference type="SMART" id="SM00355">
    <property type="entry name" value="ZnF_C2H2"/>
    <property type="match status" value="7"/>
</dbReference>
<dbReference type="SUPFAM" id="SSF57667">
    <property type="entry name" value="beta-beta-alpha zinc fingers"/>
    <property type="match status" value="4"/>
</dbReference>
<dbReference type="PROSITE" id="PS00028">
    <property type="entry name" value="ZINC_FINGER_C2H2_1"/>
    <property type="match status" value="7"/>
</dbReference>
<dbReference type="PROSITE" id="PS50157">
    <property type="entry name" value="ZINC_FINGER_C2H2_2"/>
    <property type="match status" value="7"/>
</dbReference>
<proteinExistence type="evidence at transcript level"/>
<sequence>MESLGLQTVTLSDGTTAYVQQAIKGEKLLEGQVIQLEDGTTAYIHQVTIQKESFSFEDGQPVQLEDGSMAYIHHTPKEGYDPSALEAVQLEDGSTAYIHHPVSVPPDSTILAVQTEVGLEDLAAEEEEGFGADTVVALEQYASKVLHDSPASHNGKGQQVGDRAFRCGYKGCGRLYTTAHHLKVHERAHTGDRSYRCDFPSCGKAFATGYGLKSHVRTHTGEKPYKCPEELCSKAFKTSGDLQKHVRTHTGERPFRCPFEGCGRSFTTSNIRKVHVRTHTGERPYTCPEPHCGRGFTSATNYKNHVRIHTGEKPYVCTVPGCGKRFTEYSSLYKHHVVHTHCKPYTCSSCGKTYRQTSTLAMHKRSAHGELEATEESEQALYEQQQLEAASAAEESPSPKPTHIAYLSEVKEESSDIPTQVAMVTEEDGAPQVALITQDGTQQVSLSPEDLQALGSAISVVTQHRSTTLTIPGHQEELATSGTHTVTMVSADGTQTQPVTIITSGALVTEDSSVASLHHQQVALLATANGTHIAVQLEDQQTLEEVISVATSAMQQGAVTLETTESGC</sequence>
<keyword id="KW-0238">DNA-binding</keyword>
<keyword id="KW-1017">Isopeptide bond</keyword>
<keyword id="KW-0479">Metal-binding</keyword>
<keyword id="KW-0539">Nucleus</keyword>
<keyword id="KW-1185">Reference proteome</keyword>
<keyword id="KW-0677">Repeat</keyword>
<keyword id="KW-0804">Transcription</keyword>
<keyword id="KW-0805">Transcription regulation</keyword>
<keyword id="KW-0832">Ubl conjugation</keyword>
<keyword id="KW-0862">Zinc</keyword>
<keyword id="KW-0863">Zinc-finger</keyword>
<accession>B4F7E9</accession>
<name>ZNF76_RAT</name>
<reference key="1">
    <citation type="journal article" date="2004" name="Genome Res.">
        <title>The status, quality, and expansion of the NIH full-length cDNA project: the Mammalian Gene Collection (MGC).</title>
        <authorList>
            <consortium name="The MGC Project Team"/>
        </authorList>
    </citation>
    <scope>NUCLEOTIDE SEQUENCE [LARGE SCALE MRNA]</scope>
    <source>
        <tissue>Prostate</tissue>
    </source>
</reference>
<organism>
    <name type="scientific">Rattus norvegicus</name>
    <name type="common">Rat</name>
    <dbReference type="NCBI Taxonomy" id="10116"/>
    <lineage>
        <taxon>Eukaryota</taxon>
        <taxon>Metazoa</taxon>
        <taxon>Chordata</taxon>
        <taxon>Craniata</taxon>
        <taxon>Vertebrata</taxon>
        <taxon>Euteleostomi</taxon>
        <taxon>Mammalia</taxon>
        <taxon>Eutheria</taxon>
        <taxon>Euarchontoglires</taxon>
        <taxon>Glires</taxon>
        <taxon>Rodentia</taxon>
        <taxon>Myomorpha</taxon>
        <taxon>Muroidea</taxon>
        <taxon>Muridae</taxon>
        <taxon>Murinae</taxon>
        <taxon>Rattus</taxon>
    </lineage>
</organism>
<protein>
    <recommendedName>
        <fullName>Zinc finger protein 76</fullName>
    </recommendedName>
    <alternativeName>
        <fullName>Zinc finger protein 523</fullName>
    </alternativeName>
</protein>
<gene>
    <name type="primary">Znf76</name>
    <name type="synonym">Zfp523</name>
</gene>
<comment type="function">
    <text>May be involved in transcriptional regulation.</text>
</comment>
<comment type="subcellular location">
    <subcellularLocation>
        <location evidence="4">Nucleus</location>
    </subcellularLocation>
</comment>
<comment type="similarity">
    <text evidence="4">Belongs to the krueppel C2H2-type zinc-finger protein family.</text>
</comment>
<evidence type="ECO:0000250" key="1">
    <source>
        <dbReference type="UniProtKB" id="P36508"/>
    </source>
</evidence>
<evidence type="ECO:0000255" key="2">
    <source>
        <dbReference type="PROSITE-ProRule" id="PRU00042"/>
    </source>
</evidence>
<evidence type="ECO:0000256" key="3">
    <source>
        <dbReference type="SAM" id="MobiDB-lite"/>
    </source>
</evidence>
<evidence type="ECO:0000305" key="4"/>